<feature type="chain" id="PRO_0000399057" description="Increased recombination centers protein 19">
    <location>
        <begin position="1"/>
        <end position="213"/>
    </location>
</feature>
<dbReference type="EMBL" id="AE016819">
    <property type="protein sequence ID" value="AAS53558.1"/>
    <property type="molecule type" value="Genomic_DNA"/>
</dbReference>
<dbReference type="RefSeq" id="NP_985734.1">
    <property type="nucleotide sequence ID" value="NM_211088.1"/>
</dbReference>
<dbReference type="FunCoup" id="Q753Y5">
    <property type="interactions" value="29"/>
</dbReference>
<dbReference type="EnsemblFungi" id="AAS53558">
    <property type="protein sequence ID" value="AAS53558"/>
    <property type="gene ID" value="AGOS_AFR187C"/>
</dbReference>
<dbReference type="GeneID" id="4621992"/>
<dbReference type="KEGG" id="ago:AGOS_AFR187C"/>
<dbReference type="eggNOG" id="ENOG502S35W">
    <property type="taxonomic scope" value="Eukaryota"/>
</dbReference>
<dbReference type="HOGENOM" id="CLU_106818_0_0_1"/>
<dbReference type="InParanoid" id="Q753Y5"/>
<dbReference type="OMA" id="FMRLKPF"/>
<dbReference type="OrthoDB" id="3991133at2759"/>
<dbReference type="Proteomes" id="UP000000591">
    <property type="component" value="Chromosome VI"/>
</dbReference>
<dbReference type="GO" id="GO:0030437">
    <property type="term" value="P:ascospore formation"/>
    <property type="evidence" value="ECO:0007669"/>
    <property type="project" value="EnsemblFungi"/>
</dbReference>
<dbReference type="GO" id="GO:0006302">
    <property type="term" value="P:double-strand break repair"/>
    <property type="evidence" value="ECO:0007669"/>
    <property type="project" value="EnsemblFungi"/>
</dbReference>
<dbReference type="GO" id="GO:0006312">
    <property type="term" value="P:mitotic recombination"/>
    <property type="evidence" value="ECO:0007669"/>
    <property type="project" value="EnsemblFungi"/>
</dbReference>
<dbReference type="InterPro" id="IPR016613">
    <property type="entry name" value="Irc19"/>
</dbReference>
<dbReference type="PIRSF" id="PIRSF013329">
    <property type="entry name" value="UCP013329"/>
    <property type="match status" value="1"/>
</dbReference>
<evidence type="ECO:0000250" key="1"/>
<evidence type="ECO:0000305" key="2"/>
<accession>Q753Y5</accession>
<comment type="function">
    <text evidence="1">Involved in sporulation and maintenance of the mitochondrial DNA. Is probably involved in a pathway contributing to genomic integrity (By similarity).</text>
</comment>
<comment type="similarity">
    <text evidence="2">Belongs to the IRC19 family.</text>
</comment>
<sequence length="213" mass="24903">MLPLAIPPNNIVRAMSSPNATGPLMRTSKAIITSNYTLLTDKTPYLLPVCFNESCRAEQVRMLYRRFFRLRPLVAQRAMIKESYTNYIRVKFSEDYALKRRQALPQNTCPVLDAIEAGRRSLTFILKAVSEIEDADSNPELAYDNYICRKILKNVLTLEYQRERLEFKNPKRKQILRQNYEYLDAKYHDPKYTSLRNADVSIIHFNETLGTRL</sequence>
<proteinExistence type="inferred from homology"/>
<keyword id="KW-1185">Reference proteome</keyword>
<keyword id="KW-0749">Sporulation</keyword>
<name>IRC19_EREGS</name>
<gene>
    <name type="primary">IRC19</name>
    <name type="synonym">RRG4</name>
    <name type="ordered locus">AFR187C</name>
</gene>
<protein>
    <recommendedName>
        <fullName>Increased recombination centers protein 19</fullName>
    </recommendedName>
</protein>
<organism>
    <name type="scientific">Eremothecium gossypii (strain ATCC 10895 / CBS 109.51 / FGSC 9923 / NRRL Y-1056)</name>
    <name type="common">Yeast</name>
    <name type="synonym">Ashbya gossypii</name>
    <dbReference type="NCBI Taxonomy" id="284811"/>
    <lineage>
        <taxon>Eukaryota</taxon>
        <taxon>Fungi</taxon>
        <taxon>Dikarya</taxon>
        <taxon>Ascomycota</taxon>
        <taxon>Saccharomycotina</taxon>
        <taxon>Saccharomycetes</taxon>
        <taxon>Saccharomycetales</taxon>
        <taxon>Saccharomycetaceae</taxon>
        <taxon>Eremothecium</taxon>
    </lineage>
</organism>
<reference key="1">
    <citation type="journal article" date="2004" name="Science">
        <title>The Ashbya gossypii genome as a tool for mapping the ancient Saccharomyces cerevisiae genome.</title>
        <authorList>
            <person name="Dietrich F.S."/>
            <person name="Voegeli S."/>
            <person name="Brachat S."/>
            <person name="Lerch A."/>
            <person name="Gates K."/>
            <person name="Steiner S."/>
            <person name="Mohr C."/>
            <person name="Poehlmann R."/>
            <person name="Luedi P."/>
            <person name="Choi S."/>
            <person name="Wing R.A."/>
            <person name="Flavier A."/>
            <person name="Gaffney T.D."/>
            <person name="Philippsen P."/>
        </authorList>
    </citation>
    <scope>NUCLEOTIDE SEQUENCE [LARGE SCALE GENOMIC DNA]</scope>
    <source>
        <strain>ATCC 10895 / CBS 109.51 / FGSC 9923 / NRRL Y-1056</strain>
    </source>
</reference>
<reference key="2">
    <citation type="journal article" date="2013" name="G3 (Bethesda)">
        <title>Genomes of Ashbya fungi isolated from insects reveal four mating-type loci, numerous translocations, lack of transposons, and distinct gene duplications.</title>
        <authorList>
            <person name="Dietrich F.S."/>
            <person name="Voegeli S."/>
            <person name="Kuo S."/>
            <person name="Philippsen P."/>
        </authorList>
    </citation>
    <scope>GENOME REANNOTATION</scope>
    <source>
        <strain>ATCC 10895 / CBS 109.51 / FGSC 9923 / NRRL Y-1056</strain>
    </source>
</reference>